<dbReference type="EC" id="6.1.1.20" evidence="1"/>
<dbReference type="EMBL" id="AE016795">
    <property type="protein sequence ID" value="AAO10745.1"/>
    <property type="molecule type" value="Genomic_DNA"/>
</dbReference>
<dbReference type="RefSeq" id="WP_011080238.1">
    <property type="nucleotide sequence ID" value="NC_004459.3"/>
</dbReference>
<dbReference type="SMR" id="Q8DA39"/>
<dbReference type="KEGG" id="vvu:VV1_2371"/>
<dbReference type="HOGENOM" id="CLU_016891_0_0_6"/>
<dbReference type="Proteomes" id="UP000002275">
    <property type="component" value="Chromosome 1"/>
</dbReference>
<dbReference type="GO" id="GO:0009328">
    <property type="term" value="C:phenylalanine-tRNA ligase complex"/>
    <property type="evidence" value="ECO:0007669"/>
    <property type="project" value="TreeGrafter"/>
</dbReference>
<dbReference type="GO" id="GO:0005524">
    <property type="term" value="F:ATP binding"/>
    <property type="evidence" value="ECO:0007669"/>
    <property type="project" value="UniProtKB-UniRule"/>
</dbReference>
<dbReference type="GO" id="GO:0000287">
    <property type="term" value="F:magnesium ion binding"/>
    <property type="evidence" value="ECO:0007669"/>
    <property type="project" value="UniProtKB-UniRule"/>
</dbReference>
<dbReference type="GO" id="GO:0004826">
    <property type="term" value="F:phenylalanine-tRNA ligase activity"/>
    <property type="evidence" value="ECO:0007669"/>
    <property type="project" value="UniProtKB-UniRule"/>
</dbReference>
<dbReference type="GO" id="GO:0000049">
    <property type="term" value="F:tRNA binding"/>
    <property type="evidence" value="ECO:0007669"/>
    <property type="project" value="UniProtKB-KW"/>
</dbReference>
<dbReference type="GO" id="GO:0006432">
    <property type="term" value="P:phenylalanyl-tRNA aminoacylation"/>
    <property type="evidence" value="ECO:0007669"/>
    <property type="project" value="UniProtKB-UniRule"/>
</dbReference>
<dbReference type="CDD" id="cd00769">
    <property type="entry name" value="PheRS_beta_core"/>
    <property type="match status" value="1"/>
</dbReference>
<dbReference type="CDD" id="cd02796">
    <property type="entry name" value="tRNA_bind_bactPheRS"/>
    <property type="match status" value="1"/>
</dbReference>
<dbReference type="FunFam" id="2.40.50.140:FF:000045">
    <property type="entry name" value="Phenylalanine--tRNA ligase beta subunit"/>
    <property type="match status" value="1"/>
</dbReference>
<dbReference type="FunFam" id="3.30.56.10:FF:000002">
    <property type="entry name" value="Phenylalanine--tRNA ligase beta subunit"/>
    <property type="match status" value="1"/>
</dbReference>
<dbReference type="FunFam" id="3.30.70.380:FF:000001">
    <property type="entry name" value="Phenylalanine--tRNA ligase beta subunit"/>
    <property type="match status" value="1"/>
</dbReference>
<dbReference type="FunFam" id="3.30.930.10:FF:000022">
    <property type="entry name" value="Phenylalanine--tRNA ligase beta subunit"/>
    <property type="match status" value="1"/>
</dbReference>
<dbReference type="FunFam" id="3.50.40.10:FF:000001">
    <property type="entry name" value="Phenylalanine--tRNA ligase beta subunit"/>
    <property type="match status" value="1"/>
</dbReference>
<dbReference type="Gene3D" id="3.30.56.10">
    <property type="match status" value="2"/>
</dbReference>
<dbReference type="Gene3D" id="3.30.930.10">
    <property type="entry name" value="Bira Bifunctional Protein, Domain 2"/>
    <property type="match status" value="1"/>
</dbReference>
<dbReference type="Gene3D" id="3.30.70.380">
    <property type="entry name" value="Ferrodoxin-fold anticodon-binding domain"/>
    <property type="match status" value="1"/>
</dbReference>
<dbReference type="Gene3D" id="2.40.50.140">
    <property type="entry name" value="Nucleic acid-binding proteins"/>
    <property type="match status" value="1"/>
</dbReference>
<dbReference type="Gene3D" id="3.50.40.10">
    <property type="entry name" value="Phenylalanyl-trna Synthetase, Chain B, domain 3"/>
    <property type="match status" value="1"/>
</dbReference>
<dbReference type="HAMAP" id="MF_00283">
    <property type="entry name" value="Phe_tRNA_synth_beta1"/>
    <property type="match status" value="1"/>
</dbReference>
<dbReference type="InterPro" id="IPR045864">
    <property type="entry name" value="aa-tRNA-synth_II/BPL/LPL"/>
</dbReference>
<dbReference type="InterPro" id="IPR005146">
    <property type="entry name" value="B3/B4_tRNA-bd"/>
</dbReference>
<dbReference type="InterPro" id="IPR009061">
    <property type="entry name" value="DNA-bd_dom_put_sf"/>
</dbReference>
<dbReference type="InterPro" id="IPR005121">
    <property type="entry name" value="Fdx_antiC-bd"/>
</dbReference>
<dbReference type="InterPro" id="IPR036690">
    <property type="entry name" value="Fdx_antiC-bd_sf"/>
</dbReference>
<dbReference type="InterPro" id="IPR012340">
    <property type="entry name" value="NA-bd_OB-fold"/>
</dbReference>
<dbReference type="InterPro" id="IPR045060">
    <property type="entry name" value="Phe-tRNA-ligase_IIc_bsu"/>
</dbReference>
<dbReference type="InterPro" id="IPR004532">
    <property type="entry name" value="Phe-tRNA-ligase_IIc_bsu_bact"/>
</dbReference>
<dbReference type="InterPro" id="IPR020825">
    <property type="entry name" value="Phe-tRNA_synthase-like_B3/B4"/>
</dbReference>
<dbReference type="InterPro" id="IPR041616">
    <property type="entry name" value="PheRS_beta_core"/>
</dbReference>
<dbReference type="InterPro" id="IPR002547">
    <property type="entry name" value="tRNA-bd_dom"/>
</dbReference>
<dbReference type="InterPro" id="IPR033714">
    <property type="entry name" value="tRNA_bind_bactPheRS"/>
</dbReference>
<dbReference type="InterPro" id="IPR005147">
    <property type="entry name" value="tRNA_synthase_B5-dom"/>
</dbReference>
<dbReference type="NCBIfam" id="TIGR00472">
    <property type="entry name" value="pheT_bact"/>
    <property type="match status" value="1"/>
</dbReference>
<dbReference type="NCBIfam" id="NF045760">
    <property type="entry name" value="YtpR"/>
    <property type="match status" value="1"/>
</dbReference>
<dbReference type="PANTHER" id="PTHR10947:SF0">
    <property type="entry name" value="PHENYLALANINE--TRNA LIGASE BETA SUBUNIT"/>
    <property type="match status" value="1"/>
</dbReference>
<dbReference type="PANTHER" id="PTHR10947">
    <property type="entry name" value="PHENYLALANYL-TRNA SYNTHETASE BETA CHAIN AND LEUCINE-RICH REPEAT-CONTAINING PROTEIN 47"/>
    <property type="match status" value="1"/>
</dbReference>
<dbReference type="Pfam" id="PF03483">
    <property type="entry name" value="B3_4"/>
    <property type="match status" value="1"/>
</dbReference>
<dbReference type="Pfam" id="PF03484">
    <property type="entry name" value="B5"/>
    <property type="match status" value="1"/>
</dbReference>
<dbReference type="Pfam" id="PF03147">
    <property type="entry name" value="FDX-ACB"/>
    <property type="match status" value="1"/>
</dbReference>
<dbReference type="Pfam" id="PF01588">
    <property type="entry name" value="tRNA_bind"/>
    <property type="match status" value="1"/>
</dbReference>
<dbReference type="Pfam" id="PF17759">
    <property type="entry name" value="tRNA_synthFbeta"/>
    <property type="match status" value="1"/>
</dbReference>
<dbReference type="SMART" id="SM00873">
    <property type="entry name" value="B3_4"/>
    <property type="match status" value="1"/>
</dbReference>
<dbReference type="SMART" id="SM00874">
    <property type="entry name" value="B5"/>
    <property type="match status" value="1"/>
</dbReference>
<dbReference type="SMART" id="SM00896">
    <property type="entry name" value="FDX-ACB"/>
    <property type="match status" value="1"/>
</dbReference>
<dbReference type="SUPFAM" id="SSF54991">
    <property type="entry name" value="Anticodon-binding domain of PheRS"/>
    <property type="match status" value="1"/>
</dbReference>
<dbReference type="SUPFAM" id="SSF55681">
    <property type="entry name" value="Class II aaRS and biotin synthetases"/>
    <property type="match status" value="1"/>
</dbReference>
<dbReference type="SUPFAM" id="SSF50249">
    <property type="entry name" value="Nucleic acid-binding proteins"/>
    <property type="match status" value="1"/>
</dbReference>
<dbReference type="SUPFAM" id="SSF56037">
    <property type="entry name" value="PheT/TilS domain"/>
    <property type="match status" value="1"/>
</dbReference>
<dbReference type="SUPFAM" id="SSF46955">
    <property type="entry name" value="Putative DNA-binding domain"/>
    <property type="match status" value="1"/>
</dbReference>
<dbReference type="PROSITE" id="PS51483">
    <property type="entry name" value="B5"/>
    <property type="match status" value="1"/>
</dbReference>
<dbReference type="PROSITE" id="PS51447">
    <property type="entry name" value="FDX_ACB"/>
    <property type="match status" value="1"/>
</dbReference>
<dbReference type="PROSITE" id="PS50886">
    <property type="entry name" value="TRBD"/>
    <property type="match status" value="1"/>
</dbReference>
<proteinExistence type="inferred from homology"/>
<comment type="catalytic activity">
    <reaction evidence="1">
        <text>tRNA(Phe) + L-phenylalanine + ATP = L-phenylalanyl-tRNA(Phe) + AMP + diphosphate + H(+)</text>
        <dbReference type="Rhea" id="RHEA:19413"/>
        <dbReference type="Rhea" id="RHEA-COMP:9668"/>
        <dbReference type="Rhea" id="RHEA-COMP:9699"/>
        <dbReference type="ChEBI" id="CHEBI:15378"/>
        <dbReference type="ChEBI" id="CHEBI:30616"/>
        <dbReference type="ChEBI" id="CHEBI:33019"/>
        <dbReference type="ChEBI" id="CHEBI:58095"/>
        <dbReference type="ChEBI" id="CHEBI:78442"/>
        <dbReference type="ChEBI" id="CHEBI:78531"/>
        <dbReference type="ChEBI" id="CHEBI:456215"/>
        <dbReference type="EC" id="6.1.1.20"/>
    </reaction>
</comment>
<comment type="cofactor">
    <cofactor evidence="1">
        <name>Mg(2+)</name>
        <dbReference type="ChEBI" id="CHEBI:18420"/>
    </cofactor>
    <text evidence="1">Binds 2 magnesium ions per tetramer.</text>
</comment>
<comment type="subunit">
    <text evidence="1">Tetramer of two alpha and two beta subunits.</text>
</comment>
<comment type="subcellular location">
    <subcellularLocation>
        <location evidence="1">Cytoplasm</location>
    </subcellularLocation>
</comment>
<comment type="similarity">
    <text evidence="1">Belongs to the phenylalanyl-tRNA synthetase beta subunit family. Type 1 subfamily.</text>
</comment>
<keyword id="KW-0030">Aminoacyl-tRNA synthetase</keyword>
<keyword id="KW-0067">ATP-binding</keyword>
<keyword id="KW-0963">Cytoplasm</keyword>
<keyword id="KW-0436">Ligase</keyword>
<keyword id="KW-0460">Magnesium</keyword>
<keyword id="KW-0479">Metal-binding</keyword>
<keyword id="KW-0547">Nucleotide-binding</keyword>
<keyword id="KW-0648">Protein biosynthesis</keyword>
<keyword id="KW-0694">RNA-binding</keyword>
<keyword id="KW-0820">tRNA-binding</keyword>
<sequence>MKFSESWLREWVNPAVTTDELTHQITMAGLEVDDVLPVAGTFNGVKVGHVVECGQHPDADKLRVTKVDVGEEELLDIVCGAANCRQGLKVAVATVGAVLPGDFKIKKAKLRGQPSHGMLCSFTELGIDVESDGIMELAIDAPIGMDFRDFLALNDVTVDVDLTSNRADCFSIRGMAREVGVLNRADVTEPSVAPVAPSIDDTVAIEVKAPAACPRYLGRVVKNVNVQAKTPLWMQEKLRRCGIRSIDPVVDITNFVLLEQGQPMHAFDLAKIDGGIVVRLAEQGEKITLLDGSEAELNADTLVVADHNKALAIAGIFGGEESGVTSETKDVLLECAFFAPDHIRGRARSYGLHTDSSMRFERGVDYALQVSAMERATALLVEICGGEVAPVVAVESEAELPKPNKVALRRTKLDNLLGHHIADSDVVEILERLGMTVETTAEGWVAVAPTWRFDIAIEQDLVEEVGRIYGYDNIPNQNPAAALKMHDHQEANIPLKRVRDLLVDRGYHEAITYSFVEPEQQKLVVPGVDALILPNPISAEMSAMRLGLIQGLLNTVVHNQKRQQPRVRLFEYGLRFIPCDTAENGMRQEPMLAGVIAGTRSEEHWNIDTNTVDFFDLKGDVEAILELSANDKAYSFVAAKHPALHPGQSAAIVVDGKEIGVIGTVHPELERKFGLNGRTIVFEIEWSAINRKVIPEAVALSKFPANRRDIAVVVDEAVASGDIVNACLEVGGEFLKAAKLFDVYVGKGVEEGKKSLAIALTLQSNERTLEDADIAGAVDAIVTHVSEKFGASLRD</sequence>
<evidence type="ECO:0000255" key="1">
    <source>
        <dbReference type="HAMAP-Rule" id="MF_00283"/>
    </source>
</evidence>
<accession>Q8DA39</accession>
<gene>
    <name evidence="1" type="primary">pheT</name>
    <name type="ordered locus">VV1_2371</name>
</gene>
<name>SYFB_VIBVU</name>
<protein>
    <recommendedName>
        <fullName evidence="1">Phenylalanine--tRNA ligase beta subunit</fullName>
        <ecNumber evidence="1">6.1.1.20</ecNumber>
    </recommendedName>
    <alternativeName>
        <fullName evidence="1">Phenylalanyl-tRNA synthetase beta subunit</fullName>
        <shortName evidence="1">PheRS</shortName>
    </alternativeName>
</protein>
<feature type="chain" id="PRO_0000126984" description="Phenylalanine--tRNA ligase beta subunit">
    <location>
        <begin position="1"/>
        <end position="795"/>
    </location>
</feature>
<feature type="domain" description="tRNA-binding" evidence="1">
    <location>
        <begin position="39"/>
        <end position="148"/>
    </location>
</feature>
<feature type="domain" description="B5" evidence="1">
    <location>
        <begin position="401"/>
        <end position="476"/>
    </location>
</feature>
<feature type="domain" description="FDX-ACB" evidence="1">
    <location>
        <begin position="701"/>
        <end position="794"/>
    </location>
</feature>
<feature type="binding site" evidence="1">
    <location>
        <position position="454"/>
    </location>
    <ligand>
        <name>Mg(2+)</name>
        <dbReference type="ChEBI" id="CHEBI:18420"/>
        <note>shared with alpha subunit</note>
    </ligand>
</feature>
<feature type="binding site" evidence="1">
    <location>
        <position position="460"/>
    </location>
    <ligand>
        <name>Mg(2+)</name>
        <dbReference type="ChEBI" id="CHEBI:18420"/>
        <note>shared with alpha subunit</note>
    </ligand>
</feature>
<feature type="binding site" evidence="1">
    <location>
        <position position="463"/>
    </location>
    <ligand>
        <name>Mg(2+)</name>
        <dbReference type="ChEBI" id="CHEBI:18420"/>
        <note>shared with alpha subunit</note>
    </ligand>
</feature>
<feature type="binding site" evidence="1">
    <location>
        <position position="464"/>
    </location>
    <ligand>
        <name>Mg(2+)</name>
        <dbReference type="ChEBI" id="CHEBI:18420"/>
        <note>shared with alpha subunit</note>
    </ligand>
</feature>
<organism>
    <name type="scientific">Vibrio vulnificus (strain CMCP6)</name>
    <dbReference type="NCBI Taxonomy" id="216895"/>
    <lineage>
        <taxon>Bacteria</taxon>
        <taxon>Pseudomonadati</taxon>
        <taxon>Pseudomonadota</taxon>
        <taxon>Gammaproteobacteria</taxon>
        <taxon>Vibrionales</taxon>
        <taxon>Vibrionaceae</taxon>
        <taxon>Vibrio</taxon>
    </lineage>
</organism>
<reference key="1">
    <citation type="submission" date="2002-12" db="EMBL/GenBank/DDBJ databases">
        <title>Complete genome sequence of Vibrio vulnificus CMCP6.</title>
        <authorList>
            <person name="Rhee J.H."/>
            <person name="Kim S.Y."/>
            <person name="Chung S.S."/>
            <person name="Kim J.J."/>
            <person name="Moon Y.H."/>
            <person name="Jeong H."/>
            <person name="Choy H.E."/>
        </authorList>
    </citation>
    <scope>NUCLEOTIDE SEQUENCE [LARGE SCALE GENOMIC DNA]</scope>
    <source>
        <strain>CMCP6</strain>
    </source>
</reference>